<accession>Q3B0C5</accession>
<evidence type="ECO:0000255" key="1">
    <source>
        <dbReference type="HAMAP-Rule" id="MF_01348"/>
    </source>
</evidence>
<reference key="1">
    <citation type="submission" date="2005-08" db="EMBL/GenBank/DDBJ databases">
        <title>Complete sequence of Synechococcus sp. CC9902.</title>
        <authorList>
            <person name="Copeland A."/>
            <person name="Lucas S."/>
            <person name="Lapidus A."/>
            <person name="Barry K."/>
            <person name="Detter J.C."/>
            <person name="Glavina T."/>
            <person name="Hammon N."/>
            <person name="Israni S."/>
            <person name="Pitluck S."/>
            <person name="Martinez M."/>
            <person name="Schmutz J."/>
            <person name="Larimer F."/>
            <person name="Land M."/>
            <person name="Kyrpides N."/>
            <person name="Ivanova N."/>
            <person name="Richardson P."/>
        </authorList>
    </citation>
    <scope>NUCLEOTIDE SEQUENCE [LARGE SCALE GENOMIC DNA]</scope>
    <source>
        <strain>CC9902</strain>
    </source>
</reference>
<protein>
    <recommendedName>
        <fullName evidence="1">Photosystem II assembly lipoprotein Ycf48</fullName>
    </recommendedName>
</protein>
<feature type="signal peptide" evidence="1">
    <location>
        <begin position="1"/>
        <end position="23"/>
    </location>
</feature>
<feature type="chain" id="PRO_0000239689" description="Photosystem II assembly lipoprotein Ycf48" evidence="1">
    <location>
        <begin position="24"/>
        <end position="333"/>
    </location>
</feature>
<feature type="lipid moiety-binding region" description="N-palmitoyl cysteine" evidence="1">
    <location>
        <position position="24"/>
    </location>
</feature>
<feature type="lipid moiety-binding region" description="S-diacylglycerol cysteine" evidence="1">
    <location>
        <position position="24"/>
    </location>
</feature>
<gene>
    <name evidence="1" type="primary">ycf48</name>
    <name type="ordered locus">Syncc9902_0228</name>
</gene>
<sequence length="333" mass="36067">MNRLLSSAVNLLLVLVLGVGLSGCVSTRVPTASSSPWKAIDLETQANPLDVSFTDPSHGFLVGSNRMIRETDDGGAHWNDRSLDLPDEENFRLISIDFEGQEGWIAGQPGLLMHSTDGGQNWTRLFLDTKLPGEPYLITALGKSSAELATNVGAVYKTNDGGESWEASVTDAAGAVRDLRRSSNGSYVSVSGLGNFYATWEPGETVWKVHQRVSSQRLQSIGYQPDGNLWMVARGAQIRLNDGDGNVEDWSKAIIPITNGYGYMDMAWDDDGGIWAGGGNGTLLVSHDGGDSWETDPVGDQQPSNFTRFVFDDDHAFVLGERGNLLRWVGNAV</sequence>
<keyword id="KW-0449">Lipoprotein</keyword>
<keyword id="KW-0472">Membrane</keyword>
<keyword id="KW-0564">Palmitate</keyword>
<keyword id="KW-0602">Photosynthesis</keyword>
<keyword id="KW-0604">Photosystem II</keyword>
<keyword id="KW-1185">Reference proteome</keyword>
<keyword id="KW-0732">Signal</keyword>
<keyword id="KW-0793">Thylakoid</keyword>
<dbReference type="EMBL" id="CP000097">
    <property type="protein sequence ID" value="ABB25203.1"/>
    <property type="molecule type" value="Genomic_DNA"/>
</dbReference>
<dbReference type="RefSeq" id="WP_011359064.1">
    <property type="nucleotide sequence ID" value="NC_007513.1"/>
</dbReference>
<dbReference type="SMR" id="Q3B0C5"/>
<dbReference type="STRING" id="316279.Syncc9902_0228"/>
<dbReference type="KEGG" id="sye:Syncc9902_0228"/>
<dbReference type="eggNOG" id="COG4447">
    <property type="taxonomic scope" value="Bacteria"/>
</dbReference>
<dbReference type="HOGENOM" id="CLU_057027_0_0_3"/>
<dbReference type="OrthoDB" id="9813892at2"/>
<dbReference type="Proteomes" id="UP000002712">
    <property type="component" value="Chromosome"/>
</dbReference>
<dbReference type="GO" id="GO:0009523">
    <property type="term" value="C:photosystem II"/>
    <property type="evidence" value="ECO:0007669"/>
    <property type="project" value="UniProtKB-KW"/>
</dbReference>
<dbReference type="GO" id="GO:0031676">
    <property type="term" value="C:plasma membrane-derived thylakoid membrane"/>
    <property type="evidence" value="ECO:0007669"/>
    <property type="project" value="UniProtKB-SubCell"/>
</dbReference>
<dbReference type="GO" id="GO:0031977">
    <property type="term" value="C:thylakoid lumen"/>
    <property type="evidence" value="ECO:0007669"/>
    <property type="project" value="UniProtKB-UniRule"/>
</dbReference>
<dbReference type="GO" id="GO:0015979">
    <property type="term" value="P:photosynthesis"/>
    <property type="evidence" value="ECO:0007669"/>
    <property type="project" value="UniProtKB-KW"/>
</dbReference>
<dbReference type="Gene3D" id="2.130.10.10">
    <property type="entry name" value="YVTN repeat-like/Quinoprotein amine dehydrogenase"/>
    <property type="match status" value="1"/>
</dbReference>
<dbReference type="HAMAP" id="MF_01348">
    <property type="entry name" value="Ycf48"/>
    <property type="match status" value="1"/>
</dbReference>
<dbReference type="InterPro" id="IPR028203">
    <property type="entry name" value="PSII_CF48-like_dom"/>
</dbReference>
<dbReference type="InterPro" id="IPR015943">
    <property type="entry name" value="WD40/YVTN_repeat-like_dom_sf"/>
</dbReference>
<dbReference type="InterPro" id="IPR016705">
    <property type="entry name" value="Ycf48/Hcf136"/>
</dbReference>
<dbReference type="NCBIfam" id="NF010237">
    <property type="entry name" value="PRK13684.1"/>
    <property type="match status" value="1"/>
</dbReference>
<dbReference type="PANTHER" id="PTHR47199">
    <property type="entry name" value="PHOTOSYSTEM II STABILITY/ASSEMBLY FACTOR HCF136, CHLOROPLASTIC"/>
    <property type="match status" value="1"/>
</dbReference>
<dbReference type="PANTHER" id="PTHR47199:SF2">
    <property type="entry name" value="PHOTOSYSTEM II STABILITY_ASSEMBLY FACTOR HCF136, CHLOROPLASTIC"/>
    <property type="match status" value="1"/>
</dbReference>
<dbReference type="Pfam" id="PF14870">
    <property type="entry name" value="PSII_BNR"/>
    <property type="match status" value="1"/>
</dbReference>
<dbReference type="PIRSF" id="PIRSF017875">
    <property type="entry name" value="PSII_HCF136"/>
    <property type="match status" value="1"/>
</dbReference>
<dbReference type="SUPFAM" id="SSF110296">
    <property type="entry name" value="Oligoxyloglucan reducing end-specific cellobiohydrolase"/>
    <property type="match status" value="1"/>
</dbReference>
<dbReference type="PROSITE" id="PS51257">
    <property type="entry name" value="PROKAR_LIPOPROTEIN"/>
    <property type="match status" value="1"/>
</dbReference>
<comment type="function">
    <text evidence="1">A factor required for optimal assembly of photosystem II (PSII), acting in the early stages of PSII assembly. Also plays a role in replacement of photodamaged D1 (psbA). Assists YidC in synthesis of chlorophyll-binding proteins.</text>
</comment>
<comment type="subunit">
    <text evidence="1">Part of early PSII assembly complexes which includes D1 (psbA) and PsbI; not found in mature PSII. Binds to the lumenal side of PSII complexes. Interacts with YidC.</text>
</comment>
<comment type="subcellular location">
    <subcellularLocation>
        <location evidence="1">Cellular thylakoid membrane</location>
        <topology evidence="1">Lipid-anchor</topology>
        <orientation evidence="1">Lumenal side</orientation>
    </subcellularLocation>
    <text evidence="1">Associated with a PSII precusor complex on the lumenal side of the thylakoid membrane.</text>
</comment>
<comment type="domain">
    <text evidence="1">A 7-bladed beta-propeller torus, about 55 by 55 Angstroms, with a depth of about 25 Angstroms and a central pore.</text>
</comment>
<comment type="similarity">
    <text evidence="1">Belongs to the Ycf48 family.</text>
</comment>
<proteinExistence type="inferred from homology"/>
<organism>
    <name type="scientific">Synechococcus sp. (strain CC9902)</name>
    <dbReference type="NCBI Taxonomy" id="316279"/>
    <lineage>
        <taxon>Bacteria</taxon>
        <taxon>Bacillati</taxon>
        <taxon>Cyanobacteriota</taxon>
        <taxon>Cyanophyceae</taxon>
        <taxon>Synechococcales</taxon>
        <taxon>Synechococcaceae</taxon>
        <taxon>Synechococcus</taxon>
    </lineage>
</organism>
<name>YCF48_SYNS9</name>